<organism>
    <name type="scientific">Pyrobaculum neutrophilum (strain DSM 2338 / JCM 9278 / NBRC 100436 / V24Sta)</name>
    <name type="common">Thermoproteus neutrophilus</name>
    <dbReference type="NCBI Taxonomy" id="444157"/>
    <lineage>
        <taxon>Archaea</taxon>
        <taxon>Thermoproteota</taxon>
        <taxon>Thermoprotei</taxon>
        <taxon>Thermoproteales</taxon>
        <taxon>Thermoproteaceae</taxon>
        <taxon>Pyrobaculum</taxon>
    </lineage>
</organism>
<sequence>MKAGVLALQGDVEEHIQAFRKAAQELGRSVEVVQVKRPQDLREIAVLAIPGGESTTIGALARRTGLLDALRDAIKGGLPTLGTCAGAIFLAKEVRDSVVGETKQPILGLMDIAVVRNAFGRQRESFEVDLREEGIGALKAVFIRAPAFTKAWGSARLAAPLKHPELGQIYAAAFQGHMVATAFHPELSTTAVHRYMLNLAKT</sequence>
<evidence type="ECO:0000255" key="1">
    <source>
        <dbReference type="HAMAP-Rule" id="MF_01615"/>
    </source>
</evidence>
<protein>
    <recommendedName>
        <fullName evidence="1">Pyridoxal 5'-phosphate synthase subunit PdxT</fullName>
        <ecNumber evidence="1">4.3.3.6</ecNumber>
    </recommendedName>
    <alternativeName>
        <fullName evidence="1">Pdx2</fullName>
    </alternativeName>
    <alternativeName>
        <fullName evidence="1">Pyridoxal 5'-phosphate synthase glutaminase subunit</fullName>
        <ecNumber evidence="1">3.5.1.2</ecNumber>
    </alternativeName>
</protein>
<keyword id="KW-0315">Glutamine amidotransferase</keyword>
<keyword id="KW-0378">Hydrolase</keyword>
<keyword id="KW-0456">Lyase</keyword>
<keyword id="KW-0663">Pyridoxal phosphate</keyword>
<reference key="1">
    <citation type="submission" date="2008-03" db="EMBL/GenBank/DDBJ databases">
        <title>Complete sequence of Thermoproteus neutrophilus V24Sta.</title>
        <authorList>
            <consortium name="US DOE Joint Genome Institute"/>
            <person name="Copeland A."/>
            <person name="Lucas S."/>
            <person name="Lapidus A."/>
            <person name="Glavina del Rio T."/>
            <person name="Dalin E."/>
            <person name="Tice H."/>
            <person name="Bruce D."/>
            <person name="Goodwin L."/>
            <person name="Pitluck S."/>
            <person name="Sims D."/>
            <person name="Brettin T."/>
            <person name="Detter J.C."/>
            <person name="Han C."/>
            <person name="Kuske C.R."/>
            <person name="Schmutz J."/>
            <person name="Larimer F."/>
            <person name="Land M."/>
            <person name="Hauser L."/>
            <person name="Kyrpides N."/>
            <person name="Mikhailova N."/>
            <person name="Biddle J.F."/>
            <person name="Zhang Z."/>
            <person name="Fitz-Gibbon S.T."/>
            <person name="Lowe T.M."/>
            <person name="Saltikov C."/>
            <person name="House C.H."/>
            <person name="Richardson P."/>
        </authorList>
    </citation>
    <scope>NUCLEOTIDE SEQUENCE [LARGE SCALE GENOMIC DNA]</scope>
    <source>
        <strain>DSM 2338 / JCM 9278 / NBRC 100436 / V24Sta</strain>
    </source>
</reference>
<dbReference type="EC" id="4.3.3.6" evidence="1"/>
<dbReference type="EC" id="3.5.1.2" evidence="1"/>
<dbReference type="EMBL" id="CP001014">
    <property type="protein sequence ID" value="ACB39221.1"/>
    <property type="molecule type" value="Genomic_DNA"/>
</dbReference>
<dbReference type="RefSeq" id="WP_012349642.1">
    <property type="nucleotide sequence ID" value="NC_010525.1"/>
</dbReference>
<dbReference type="SMR" id="B1YB90"/>
<dbReference type="STRING" id="444157.Tneu_0268"/>
<dbReference type="MEROPS" id="C26.A32"/>
<dbReference type="GeneID" id="6165565"/>
<dbReference type="KEGG" id="tne:Tneu_0268"/>
<dbReference type="eggNOG" id="arCOG00034">
    <property type="taxonomic scope" value="Archaea"/>
</dbReference>
<dbReference type="HOGENOM" id="CLU_069674_2_0_2"/>
<dbReference type="OrthoDB" id="26717at2157"/>
<dbReference type="UniPathway" id="UPA00245"/>
<dbReference type="Proteomes" id="UP000001694">
    <property type="component" value="Chromosome"/>
</dbReference>
<dbReference type="GO" id="GO:0005829">
    <property type="term" value="C:cytosol"/>
    <property type="evidence" value="ECO:0007669"/>
    <property type="project" value="TreeGrafter"/>
</dbReference>
<dbReference type="GO" id="GO:1903600">
    <property type="term" value="C:glutaminase complex"/>
    <property type="evidence" value="ECO:0007669"/>
    <property type="project" value="TreeGrafter"/>
</dbReference>
<dbReference type="GO" id="GO:0004359">
    <property type="term" value="F:glutaminase activity"/>
    <property type="evidence" value="ECO:0007669"/>
    <property type="project" value="UniProtKB-UniRule"/>
</dbReference>
<dbReference type="GO" id="GO:0036381">
    <property type="term" value="F:pyridoxal 5'-phosphate synthase (glutamine hydrolysing) activity"/>
    <property type="evidence" value="ECO:0007669"/>
    <property type="project" value="UniProtKB-UniRule"/>
</dbReference>
<dbReference type="GO" id="GO:0006543">
    <property type="term" value="P:glutamine catabolic process"/>
    <property type="evidence" value="ECO:0007669"/>
    <property type="project" value="UniProtKB-UniRule"/>
</dbReference>
<dbReference type="GO" id="GO:0042823">
    <property type="term" value="P:pyridoxal phosphate biosynthetic process"/>
    <property type="evidence" value="ECO:0007669"/>
    <property type="project" value="UniProtKB-UniRule"/>
</dbReference>
<dbReference type="GO" id="GO:0008614">
    <property type="term" value="P:pyridoxine metabolic process"/>
    <property type="evidence" value="ECO:0007669"/>
    <property type="project" value="TreeGrafter"/>
</dbReference>
<dbReference type="CDD" id="cd01749">
    <property type="entry name" value="GATase1_PB"/>
    <property type="match status" value="1"/>
</dbReference>
<dbReference type="Gene3D" id="3.40.50.880">
    <property type="match status" value="1"/>
</dbReference>
<dbReference type="HAMAP" id="MF_01615">
    <property type="entry name" value="PdxT"/>
    <property type="match status" value="1"/>
</dbReference>
<dbReference type="InterPro" id="IPR029062">
    <property type="entry name" value="Class_I_gatase-like"/>
</dbReference>
<dbReference type="InterPro" id="IPR002161">
    <property type="entry name" value="PdxT/SNO"/>
</dbReference>
<dbReference type="InterPro" id="IPR021196">
    <property type="entry name" value="PdxT/SNO_CS"/>
</dbReference>
<dbReference type="NCBIfam" id="TIGR03800">
    <property type="entry name" value="PLP_synth_Pdx2"/>
    <property type="match status" value="1"/>
</dbReference>
<dbReference type="PANTHER" id="PTHR31559">
    <property type="entry name" value="PYRIDOXAL 5'-PHOSPHATE SYNTHASE SUBUNIT SNO"/>
    <property type="match status" value="1"/>
</dbReference>
<dbReference type="PANTHER" id="PTHR31559:SF0">
    <property type="entry name" value="PYRIDOXAL 5'-PHOSPHATE SYNTHASE SUBUNIT SNO1-RELATED"/>
    <property type="match status" value="1"/>
</dbReference>
<dbReference type="Pfam" id="PF01174">
    <property type="entry name" value="SNO"/>
    <property type="match status" value="1"/>
</dbReference>
<dbReference type="PIRSF" id="PIRSF005639">
    <property type="entry name" value="Glut_amidoT_SNO"/>
    <property type="match status" value="1"/>
</dbReference>
<dbReference type="SUPFAM" id="SSF52317">
    <property type="entry name" value="Class I glutamine amidotransferase-like"/>
    <property type="match status" value="1"/>
</dbReference>
<dbReference type="PROSITE" id="PS01236">
    <property type="entry name" value="PDXT_SNO_1"/>
    <property type="match status" value="1"/>
</dbReference>
<dbReference type="PROSITE" id="PS51130">
    <property type="entry name" value="PDXT_SNO_2"/>
    <property type="match status" value="1"/>
</dbReference>
<feature type="chain" id="PRO_1000185910" description="Pyridoxal 5'-phosphate synthase subunit PdxT">
    <location>
        <begin position="1"/>
        <end position="202"/>
    </location>
</feature>
<feature type="active site" description="Nucleophile" evidence="1">
    <location>
        <position position="84"/>
    </location>
</feature>
<feature type="active site" description="Charge relay system" evidence="1">
    <location>
        <position position="184"/>
    </location>
</feature>
<feature type="active site" description="Charge relay system" evidence="1">
    <location>
        <position position="186"/>
    </location>
</feature>
<feature type="binding site" evidence="1">
    <location>
        <begin position="52"/>
        <end position="54"/>
    </location>
    <ligand>
        <name>L-glutamine</name>
        <dbReference type="ChEBI" id="CHEBI:58359"/>
    </ligand>
</feature>
<feature type="binding site" evidence="1">
    <location>
        <position position="116"/>
    </location>
    <ligand>
        <name>L-glutamine</name>
        <dbReference type="ChEBI" id="CHEBI:58359"/>
    </ligand>
</feature>
<feature type="binding site" evidence="1">
    <location>
        <begin position="143"/>
        <end position="144"/>
    </location>
    <ligand>
        <name>L-glutamine</name>
        <dbReference type="ChEBI" id="CHEBI:58359"/>
    </ligand>
</feature>
<accession>B1YB90</accession>
<proteinExistence type="inferred from homology"/>
<gene>
    <name evidence="1" type="primary">pdxT</name>
    <name type="ordered locus">Tneu_0268</name>
</gene>
<comment type="function">
    <text evidence="1">Catalyzes the hydrolysis of glutamine to glutamate and ammonia as part of the biosynthesis of pyridoxal 5'-phosphate. The resulting ammonia molecule is channeled to the active site of PdxS.</text>
</comment>
<comment type="catalytic activity">
    <reaction evidence="1">
        <text>aldehydo-D-ribose 5-phosphate + D-glyceraldehyde 3-phosphate + L-glutamine = pyridoxal 5'-phosphate + L-glutamate + phosphate + 3 H2O + H(+)</text>
        <dbReference type="Rhea" id="RHEA:31507"/>
        <dbReference type="ChEBI" id="CHEBI:15377"/>
        <dbReference type="ChEBI" id="CHEBI:15378"/>
        <dbReference type="ChEBI" id="CHEBI:29985"/>
        <dbReference type="ChEBI" id="CHEBI:43474"/>
        <dbReference type="ChEBI" id="CHEBI:58273"/>
        <dbReference type="ChEBI" id="CHEBI:58359"/>
        <dbReference type="ChEBI" id="CHEBI:59776"/>
        <dbReference type="ChEBI" id="CHEBI:597326"/>
        <dbReference type="EC" id="4.3.3.6"/>
    </reaction>
</comment>
<comment type="catalytic activity">
    <reaction evidence="1">
        <text>L-glutamine + H2O = L-glutamate + NH4(+)</text>
        <dbReference type="Rhea" id="RHEA:15889"/>
        <dbReference type="ChEBI" id="CHEBI:15377"/>
        <dbReference type="ChEBI" id="CHEBI:28938"/>
        <dbReference type="ChEBI" id="CHEBI:29985"/>
        <dbReference type="ChEBI" id="CHEBI:58359"/>
        <dbReference type="EC" id="3.5.1.2"/>
    </reaction>
</comment>
<comment type="pathway">
    <text evidence="1">Cofactor biosynthesis; pyridoxal 5'-phosphate biosynthesis.</text>
</comment>
<comment type="subunit">
    <text evidence="1">In the presence of PdxS, forms a dodecamer of heterodimers. Only shows activity in the heterodimer.</text>
</comment>
<comment type="similarity">
    <text evidence="1">Belongs to the glutaminase PdxT/SNO family.</text>
</comment>
<name>PDXT_PYRNV</name>